<organism>
    <name type="scientific">Arabidopsis thaliana</name>
    <name type="common">Mouse-ear cress</name>
    <dbReference type="NCBI Taxonomy" id="3702"/>
    <lineage>
        <taxon>Eukaryota</taxon>
        <taxon>Viridiplantae</taxon>
        <taxon>Streptophyta</taxon>
        <taxon>Embryophyta</taxon>
        <taxon>Tracheophyta</taxon>
        <taxon>Spermatophyta</taxon>
        <taxon>Magnoliopsida</taxon>
        <taxon>eudicotyledons</taxon>
        <taxon>Gunneridae</taxon>
        <taxon>Pentapetalae</taxon>
        <taxon>rosids</taxon>
        <taxon>malvids</taxon>
        <taxon>Brassicales</taxon>
        <taxon>Brassicaceae</taxon>
        <taxon>Camelineae</taxon>
        <taxon>Arabidopsis</taxon>
    </lineage>
</organism>
<name>CXE1_ARATH</name>
<reference key="1">
    <citation type="journal article" date="2000" name="Nature">
        <title>Sequence and analysis of chromosome 1 of the plant Arabidopsis thaliana.</title>
        <authorList>
            <person name="Theologis A."/>
            <person name="Ecker J.R."/>
            <person name="Palm C.J."/>
            <person name="Federspiel N.A."/>
            <person name="Kaul S."/>
            <person name="White O."/>
            <person name="Alonso J."/>
            <person name="Altafi H."/>
            <person name="Araujo R."/>
            <person name="Bowman C.L."/>
            <person name="Brooks S.Y."/>
            <person name="Buehler E."/>
            <person name="Chan A."/>
            <person name="Chao Q."/>
            <person name="Chen H."/>
            <person name="Cheuk R.F."/>
            <person name="Chin C.W."/>
            <person name="Chung M.K."/>
            <person name="Conn L."/>
            <person name="Conway A.B."/>
            <person name="Conway A.R."/>
            <person name="Creasy T.H."/>
            <person name="Dewar K."/>
            <person name="Dunn P."/>
            <person name="Etgu P."/>
            <person name="Feldblyum T.V."/>
            <person name="Feng J.-D."/>
            <person name="Fong B."/>
            <person name="Fujii C.Y."/>
            <person name="Gill J.E."/>
            <person name="Goldsmith A.D."/>
            <person name="Haas B."/>
            <person name="Hansen N.F."/>
            <person name="Hughes B."/>
            <person name="Huizar L."/>
            <person name="Hunter J.L."/>
            <person name="Jenkins J."/>
            <person name="Johnson-Hopson C."/>
            <person name="Khan S."/>
            <person name="Khaykin E."/>
            <person name="Kim C.J."/>
            <person name="Koo H.L."/>
            <person name="Kremenetskaia I."/>
            <person name="Kurtz D.B."/>
            <person name="Kwan A."/>
            <person name="Lam B."/>
            <person name="Langin-Hooper S."/>
            <person name="Lee A."/>
            <person name="Lee J.M."/>
            <person name="Lenz C.A."/>
            <person name="Li J.H."/>
            <person name="Li Y.-P."/>
            <person name="Lin X."/>
            <person name="Liu S.X."/>
            <person name="Liu Z.A."/>
            <person name="Luros J.S."/>
            <person name="Maiti R."/>
            <person name="Marziali A."/>
            <person name="Militscher J."/>
            <person name="Miranda M."/>
            <person name="Nguyen M."/>
            <person name="Nierman W.C."/>
            <person name="Osborne B.I."/>
            <person name="Pai G."/>
            <person name="Peterson J."/>
            <person name="Pham P.K."/>
            <person name="Rizzo M."/>
            <person name="Rooney T."/>
            <person name="Rowley D."/>
            <person name="Sakano H."/>
            <person name="Salzberg S.L."/>
            <person name="Schwartz J.R."/>
            <person name="Shinn P."/>
            <person name="Southwick A.M."/>
            <person name="Sun H."/>
            <person name="Tallon L.J."/>
            <person name="Tambunga G."/>
            <person name="Toriumi M.J."/>
            <person name="Town C.D."/>
            <person name="Utterback T."/>
            <person name="Van Aken S."/>
            <person name="Vaysberg M."/>
            <person name="Vysotskaia V.S."/>
            <person name="Walker M."/>
            <person name="Wu D."/>
            <person name="Yu G."/>
            <person name="Fraser C.M."/>
            <person name="Venter J.C."/>
            <person name="Davis R.W."/>
        </authorList>
    </citation>
    <scope>NUCLEOTIDE SEQUENCE [LARGE SCALE GENOMIC DNA]</scope>
    <source>
        <strain>cv. Columbia</strain>
    </source>
</reference>
<reference key="2">
    <citation type="journal article" date="2017" name="Plant J.">
        <title>Araport11: a complete reannotation of the Arabidopsis thaliana reference genome.</title>
        <authorList>
            <person name="Cheng C.Y."/>
            <person name="Krishnakumar V."/>
            <person name="Chan A.P."/>
            <person name="Thibaud-Nissen F."/>
            <person name="Schobel S."/>
            <person name="Town C.D."/>
        </authorList>
    </citation>
    <scope>GENOME REANNOTATION</scope>
    <source>
        <strain>cv. Columbia</strain>
    </source>
</reference>
<reference key="3">
    <citation type="submission" date="2006-12" db="EMBL/GenBank/DDBJ databases">
        <title>Arabidopsis ORF clones.</title>
        <authorList>
            <person name="Bautista V.R."/>
            <person name="Kim C.J."/>
            <person name="Chen H."/>
            <person name="Quinitio C."/>
            <person name="Ecker J.R."/>
        </authorList>
    </citation>
    <scope>NUCLEOTIDE SEQUENCE [LARGE SCALE MRNA]</scope>
    <source>
        <strain>cv. Columbia</strain>
    </source>
</reference>
<reference key="4">
    <citation type="journal article" date="2003" name="Science">
        <title>Empirical analysis of transcriptional activity in the Arabidopsis genome.</title>
        <authorList>
            <person name="Yamada K."/>
            <person name="Lim J."/>
            <person name="Dale J.M."/>
            <person name="Chen H."/>
            <person name="Shinn P."/>
            <person name="Palm C.J."/>
            <person name="Southwick A.M."/>
            <person name="Wu H.C."/>
            <person name="Kim C.J."/>
            <person name="Nguyen M."/>
            <person name="Pham P.K."/>
            <person name="Cheuk R.F."/>
            <person name="Karlin-Newmann G."/>
            <person name="Liu S.X."/>
            <person name="Lam B."/>
            <person name="Sakano H."/>
            <person name="Wu T."/>
            <person name="Yu G."/>
            <person name="Miranda M."/>
            <person name="Quach H.L."/>
            <person name="Tripp M."/>
            <person name="Chang C.H."/>
            <person name="Lee J.M."/>
            <person name="Toriumi M.J."/>
            <person name="Chan M.M."/>
            <person name="Tang C.C."/>
            <person name="Onodera C.S."/>
            <person name="Deng J.M."/>
            <person name="Akiyama K."/>
            <person name="Ansari Y."/>
            <person name="Arakawa T."/>
            <person name="Banh J."/>
            <person name="Banno F."/>
            <person name="Bowser L."/>
            <person name="Brooks S.Y."/>
            <person name="Carninci P."/>
            <person name="Chao Q."/>
            <person name="Choy N."/>
            <person name="Enju A."/>
            <person name="Goldsmith A.D."/>
            <person name="Gurjal M."/>
            <person name="Hansen N.F."/>
            <person name="Hayashizaki Y."/>
            <person name="Johnson-Hopson C."/>
            <person name="Hsuan V.W."/>
            <person name="Iida K."/>
            <person name="Karnes M."/>
            <person name="Khan S."/>
            <person name="Koesema E."/>
            <person name="Ishida J."/>
            <person name="Jiang P.X."/>
            <person name="Jones T."/>
            <person name="Kawai J."/>
            <person name="Kamiya A."/>
            <person name="Meyers C."/>
            <person name="Nakajima M."/>
            <person name="Narusaka M."/>
            <person name="Seki M."/>
            <person name="Sakurai T."/>
            <person name="Satou M."/>
            <person name="Tamse R."/>
            <person name="Vaysberg M."/>
            <person name="Wallender E.K."/>
            <person name="Wong C."/>
            <person name="Yamamura Y."/>
            <person name="Yuan S."/>
            <person name="Shinozaki K."/>
            <person name="Davis R.W."/>
            <person name="Theologis A."/>
            <person name="Ecker J.R."/>
        </authorList>
    </citation>
    <scope>NUCLEOTIDE SEQUENCE [LARGE SCALE MRNA] OF 124-318</scope>
    <source>
        <strain>cv. Columbia</strain>
    </source>
</reference>
<reference key="5">
    <citation type="journal article" date="2003" name="J. Mol. Evol.">
        <title>The carboxylesterase gene family from Arabidopsis thaliana.</title>
        <authorList>
            <person name="Marshall S.D."/>
            <person name="Putterill J.J."/>
            <person name="Plummer K.M."/>
            <person name="Newcomb R.D."/>
        </authorList>
    </citation>
    <scope>TISSUE SPECIFICITY</scope>
    <scope>GENE FAMILY</scope>
    <scope>NOMENCLATURE</scope>
</reference>
<keyword id="KW-0007">Acetylation</keyword>
<keyword id="KW-0378">Hydrolase</keyword>
<keyword id="KW-1185">Reference proteome</keyword>
<keyword id="KW-0719">Serine esterase</keyword>
<protein>
    <recommendedName>
        <fullName>Probable carboxylesterase 1</fullName>
    </recommendedName>
    <alternativeName>
        <fullName>AtCXE1</fullName>
        <ecNumber>3.1.1.1</ecNumber>
    </alternativeName>
</protein>
<proteinExistence type="evidence at transcript level"/>
<accession>Q9LMA7</accession>
<accession>Q84W95</accession>
<gene>
    <name type="primary">CXE1</name>
    <name type="ordered locus">At1g19190</name>
    <name type="ORF">T29M8.6</name>
</gene>
<comment type="function">
    <text evidence="1">Carboxylesterase acting on esters with varying acyl chain length.</text>
</comment>
<comment type="catalytic activity">
    <reaction>
        <text>a carboxylic ester + H2O = an alcohol + a carboxylate + H(+)</text>
        <dbReference type="Rhea" id="RHEA:21164"/>
        <dbReference type="ChEBI" id="CHEBI:15377"/>
        <dbReference type="ChEBI" id="CHEBI:15378"/>
        <dbReference type="ChEBI" id="CHEBI:29067"/>
        <dbReference type="ChEBI" id="CHEBI:30879"/>
        <dbReference type="ChEBI" id="CHEBI:33308"/>
        <dbReference type="EC" id="3.1.1.1"/>
    </reaction>
</comment>
<comment type="tissue specificity">
    <text evidence="5">Expressed in roots, stems, flowers and siliques.</text>
</comment>
<comment type="similarity">
    <text evidence="6">Belongs to the 'GDXG' lipolytic enzyme family.</text>
</comment>
<sequence length="318" mass="36081">MDSEIAFDYSPRFRIFKNGGIERLVPETFVPPSLNPENGVVSKDAVYSPEKNLSLRIYLPQNSVYETGEKKIPLLVYFHGGGFIMETAFSPIYHTFLTSAVSATDCIAVSVEYRRAPEHPIPTLYEDSWDAIQWIFTHITRSGPEDWLNKHADFSKVFLAGDSAGANIAHHMAIRVDKEKLPPENFKISGMILFHPYFLSKALIEEMEVEAMRYYERLWRIASPDSGNGVEDPWINVVGSDLTGLGCRRVLVMVAGNDVLARGGWSYVAELEKSGWIGKVKVMETKEEGHVFHLRDPDSENARRVLRNFAEFLKEETF</sequence>
<dbReference type="EC" id="3.1.1.1"/>
<dbReference type="EMBL" id="AC069143">
    <property type="protein sequence ID" value="AAF82230.1"/>
    <property type="molecule type" value="Genomic_DNA"/>
</dbReference>
<dbReference type="EMBL" id="CP002684">
    <property type="protein sequence ID" value="AEE29816.1"/>
    <property type="molecule type" value="Genomic_DNA"/>
</dbReference>
<dbReference type="EMBL" id="BT029511">
    <property type="protein sequence ID" value="ABL66767.1"/>
    <property type="molecule type" value="mRNA"/>
</dbReference>
<dbReference type="EMBL" id="BT004093">
    <property type="protein sequence ID" value="AAO42119.1"/>
    <property type="molecule type" value="mRNA"/>
</dbReference>
<dbReference type="PIR" id="D86325">
    <property type="entry name" value="D86325"/>
</dbReference>
<dbReference type="RefSeq" id="NP_173353.1">
    <property type="nucleotide sequence ID" value="NM_101777.2"/>
</dbReference>
<dbReference type="SMR" id="Q9LMA7"/>
<dbReference type="FunCoup" id="Q9LMA7">
    <property type="interactions" value="73"/>
</dbReference>
<dbReference type="STRING" id="3702.Q9LMA7"/>
<dbReference type="ESTHER" id="arath-CXE1">
    <property type="family name" value="Plant_carboxylesterase"/>
</dbReference>
<dbReference type="iPTMnet" id="Q9LMA7"/>
<dbReference type="PaxDb" id="3702-AT1G19190.1"/>
<dbReference type="ProteomicsDB" id="220513"/>
<dbReference type="EnsemblPlants" id="AT1G19190.1">
    <property type="protein sequence ID" value="AT1G19190.1"/>
    <property type="gene ID" value="AT1G19190"/>
</dbReference>
<dbReference type="GeneID" id="838502"/>
<dbReference type="Gramene" id="AT1G19190.1">
    <property type="protein sequence ID" value="AT1G19190.1"/>
    <property type="gene ID" value="AT1G19190"/>
</dbReference>
<dbReference type="KEGG" id="ath:AT1G19190"/>
<dbReference type="Araport" id="AT1G19190"/>
<dbReference type="TAIR" id="AT1G19190"/>
<dbReference type="eggNOG" id="KOG1515">
    <property type="taxonomic scope" value="Eukaryota"/>
</dbReference>
<dbReference type="HOGENOM" id="CLU_012494_22_0_1"/>
<dbReference type="InParanoid" id="Q9LMA7"/>
<dbReference type="OMA" id="WIFTHIT"/>
<dbReference type="OrthoDB" id="408631at2759"/>
<dbReference type="PhylomeDB" id="Q9LMA7"/>
<dbReference type="BioCyc" id="ARA:AT1G19190-MONOMER"/>
<dbReference type="PRO" id="PR:Q9LMA7"/>
<dbReference type="Proteomes" id="UP000006548">
    <property type="component" value="Chromosome 1"/>
</dbReference>
<dbReference type="ExpressionAtlas" id="Q9LMA7">
    <property type="expression patterns" value="baseline and differential"/>
</dbReference>
<dbReference type="GO" id="GO:0005886">
    <property type="term" value="C:plasma membrane"/>
    <property type="evidence" value="ECO:0000314"/>
    <property type="project" value="TAIR"/>
</dbReference>
<dbReference type="GO" id="GO:0106435">
    <property type="term" value="F:carboxylesterase activity"/>
    <property type="evidence" value="ECO:0007669"/>
    <property type="project" value="UniProtKB-EC"/>
</dbReference>
<dbReference type="Gene3D" id="3.40.50.1820">
    <property type="entry name" value="alpha/beta hydrolase"/>
    <property type="match status" value="1"/>
</dbReference>
<dbReference type="InterPro" id="IPR013094">
    <property type="entry name" value="AB_hydrolase_3"/>
</dbReference>
<dbReference type="InterPro" id="IPR029058">
    <property type="entry name" value="AB_hydrolase_fold"/>
</dbReference>
<dbReference type="InterPro" id="IPR050466">
    <property type="entry name" value="Carboxylest/Gibb_receptor"/>
</dbReference>
<dbReference type="InterPro" id="IPR033140">
    <property type="entry name" value="Lipase_GDXG_put_SER_AS"/>
</dbReference>
<dbReference type="PANTHER" id="PTHR23024">
    <property type="entry name" value="ARYLACETAMIDE DEACETYLASE"/>
    <property type="match status" value="1"/>
</dbReference>
<dbReference type="PANTHER" id="PTHR23024:SF544">
    <property type="entry name" value="CARBOXYLESTERASE 1-RELATED"/>
    <property type="match status" value="1"/>
</dbReference>
<dbReference type="Pfam" id="PF07859">
    <property type="entry name" value="Abhydrolase_3"/>
    <property type="match status" value="1"/>
</dbReference>
<dbReference type="SUPFAM" id="SSF53474">
    <property type="entry name" value="alpha/beta-Hydrolases"/>
    <property type="match status" value="1"/>
</dbReference>
<dbReference type="PROSITE" id="PS01174">
    <property type="entry name" value="LIPASE_GDXG_SER"/>
    <property type="match status" value="1"/>
</dbReference>
<feature type="chain" id="PRO_0000402547" description="Probable carboxylesterase 1">
    <location>
        <begin position="1"/>
        <end position="318"/>
    </location>
</feature>
<feature type="short sequence motif" description="Involved in the stabilization of the negatively charged intermediate by the formation of the oxyanion hole" evidence="2">
    <location>
        <begin position="79"/>
        <end position="81"/>
    </location>
</feature>
<feature type="active site" evidence="4">
    <location>
        <position position="163"/>
    </location>
</feature>
<feature type="active site" evidence="4">
    <location>
        <position position="258"/>
    </location>
</feature>
<feature type="active site" evidence="4">
    <location>
        <position position="290"/>
    </location>
</feature>
<feature type="modified residue" description="N-acetylmethionine" evidence="3">
    <location>
        <position position="1"/>
    </location>
</feature>
<evidence type="ECO:0000250" key="1"/>
<evidence type="ECO:0000250" key="2">
    <source>
        <dbReference type="UniProtKB" id="Q5NUF3"/>
    </source>
</evidence>
<evidence type="ECO:0000250" key="3">
    <source>
        <dbReference type="UniProtKB" id="Q9SMN0"/>
    </source>
</evidence>
<evidence type="ECO:0000255" key="4">
    <source>
        <dbReference type="PROSITE-ProRule" id="PRU10038"/>
    </source>
</evidence>
<evidence type="ECO:0000269" key="5">
    <source>
    </source>
</evidence>
<evidence type="ECO:0000305" key="6"/>